<protein>
    <recommendedName>
        <fullName evidence="4">Pre-mRNA-splicing regulator WTAP</fullName>
    </recommendedName>
    <alternativeName>
        <fullName evidence="1">Female-lethal(2)D homolog</fullName>
    </alternativeName>
    <alternativeName>
        <fullName evidence="1">WT1-associated protein</fullName>
    </alternativeName>
    <alternativeName>
        <fullName evidence="1">Wilms tumor 1-associating protein</fullName>
    </alternativeName>
</protein>
<sequence>MTNEEPLPKKVRLNESDFKVLPREELLQRWKQFEAYVQALENKYTDLNSNDVTGLRESEEKLKQQQQDSARRENILVMRLATKEQEMQECTTQIQHLKQVQQPSVAQLRATMVDPAINLFFIKMKAELEQTKDKLEQAQNELSAWKFTPDSQTGKKLMAKCRMLIQENQELGRQLSQGRIAQLEAELALQKKYSEELKSSQDELNDFIIQLDEEVEGMQSTILVLQQQLKDSRQQLSQFQQQIQTSGNRTPSSESKDEGETSGKDCGRILNGPSNGGSSHQRTHSSVGLYREGSSTEEDFSASPINEGKLPNHSEERTSRGGSSYMNQLSTGYESVDSPTGSENSLTHQSNDTDSNHDSQEEKPVSGKGNRTVSSRHLQNGLDSSVNVQGSVL</sequence>
<reference key="1">
    <citation type="submission" date="2006-10" db="EMBL/GenBank/DDBJ databases">
        <authorList>
            <consortium name="Sanger Xenopus tropicalis EST/cDNA project"/>
        </authorList>
    </citation>
    <scope>NUCLEOTIDE SEQUENCE [LARGE SCALE MRNA]</scope>
    <source>
        <tissue>Egg</tissue>
    </source>
</reference>
<reference key="2">
    <citation type="submission" date="2003-12" db="EMBL/GenBank/DDBJ databases">
        <authorList>
            <consortium name="NIH - Xenopus Gene Collection (XGC) project"/>
        </authorList>
    </citation>
    <scope>NUCLEOTIDE SEQUENCE [LARGE SCALE MRNA]</scope>
    <source>
        <tissue>Embryo</tissue>
    </source>
</reference>
<proteinExistence type="evidence at transcript level"/>
<organism>
    <name type="scientific">Xenopus tropicalis</name>
    <name type="common">Western clawed frog</name>
    <name type="synonym">Silurana tropicalis</name>
    <dbReference type="NCBI Taxonomy" id="8364"/>
    <lineage>
        <taxon>Eukaryota</taxon>
        <taxon>Metazoa</taxon>
        <taxon>Chordata</taxon>
        <taxon>Craniata</taxon>
        <taxon>Vertebrata</taxon>
        <taxon>Euteleostomi</taxon>
        <taxon>Amphibia</taxon>
        <taxon>Batrachia</taxon>
        <taxon>Anura</taxon>
        <taxon>Pipoidea</taxon>
        <taxon>Pipidae</taxon>
        <taxon>Xenopodinae</taxon>
        <taxon>Xenopus</taxon>
        <taxon>Silurana</taxon>
    </lineage>
</organism>
<dbReference type="EMBL" id="CR760675">
    <property type="protein sequence ID" value="CAJ82198.1"/>
    <property type="molecule type" value="mRNA"/>
</dbReference>
<dbReference type="EMBL" id="CR926261">
    <property type="protein sequence ID" value="CAJ81438.1"/>
    <property type="molecule type" value="mRNA"/>
</dbReference>
<dbReference type="EMBL" id="BC063362">
    <property type="protein sequence ID" value="AAH63362.1"/>
    <property type="molecule type" value="mRNA"/>
</dbReference>
<dbReference type="RefSeq" id="NP_989199.1">
    <property type="nucleotide sequence ID" value="NM_203868.1"/>
</dbReference>
<dbReference type="SMR" id="Q6P4K5"/>
<dbReference type="FunCoup" id="Q6P4K5">
    <property type="interactions" value="4635"/>
</dbReference>
<dbReference type="STRING" id="8364.ENSXETP00000010088"/>
<dbReference type="PaxDb" id="8364-ENSXETP00000045788"/>
<dbReference type="GeneID" id="394807"/>
<dbReference type="KEGG" id="xtr:394807"/>
<dbReference type="AGR" id="Xenbase:XB-GENE-482822"/>
<dbReference type="CTD" id="9589"/>
<dbReference type="Xenbase" id="XB-GENE-482822">
    <property type="gene designation" value="wtap"/>
</dbReference>
<dbReference type="eggNOG" id="KOG2991">
    <property type="taxonomic scope" value="Eukaryota"/>
</dbReference>
<dbReference type="InParanoid" id="Q6P4K5"/>
<dbReference type="OMA" id="NTDPHED"/>
<dbReference type="OrthoDB" id="3366661at2759"/>
<dbReference type="Proteomes" id="UP000008143">
    <property type="component" value="Chromosome 5"/>
</dbReference>
<dbReference type="GO" id="GO:0005737">
    <property type="term" value="C:cytoplasm"/>
    <property type="evidence" value="ECO:0000250"/>
    <property type="project" value="UniProtKB"/>
</dbReference>
<dbReference type="GO" id="GO:0016607">
    <property type="term" value="C:nuclear speck"/>
    <property type="evidence" value="ECO:0000250"/>
    <property type="project" value="UniProtKB"/>
</dbReference>
<dbReference type="GO" id="GO:0005634">
    <property type="term" value="C:nucleus"/>
    <property type="evidence" value="ECO:0000250"/>
    <property type="project" value="UniProtKB"/>
</dbReference>
<dbReference type="GO" id="GO:0036396">
    <property type="term" value="C:RNA N6-methyladenosine methyltransferase complex"/>
    <property type="evidence" value="ECO:0000250"/>
    <property type="project" value="UniProtKB"/>
</dbReference>
<dbReference type="GO" id="GO:0016556">
    <property type="term" value="P:mRNA modification"/>
    <property type="evidence" value="ECO:0007669"/>
    <property type="project" value="InterPro"/>
</dbReference>
<dbReference type="GO" id="GO:0006397">
    <property type="term" value="P:mRNA processing"/>
    <property type="evidence" value="ECO:0000250"/>
    <property type="project" value="UniProtKB"/>
</dbReference>
<dbReference type="GO" id="GO:0000381">
    <property type="term" value="P:regulation of alternative mRNA splicing, via spliceosome"/>
    <property type="evidence" value="ECO:0000250"/>
    <property type="project" value="UniProtKB"/>
</dbReference>
<dbReference type="GO" id="GO:0008380">
    <property type="term" value="P:RNA splicing"/>
    <property type="evidence" value="ECO:0007669"/>
    <property type="project" value="UniProtKB-KW"/>
</dbReference>
<dbReference type="InterPro" id="IPR033757">
    <property type="entry name" value="WTAP"/>
</dbReference>
<dbReference type="PANTHER" id="PTHR15217:SF0">
    <property type="entry name" value="PRE-MRNA-SPLICING REGULATOR WTAP"/>
    <property type="match status" value="1"/>
</dbReference>
<dbReference type="PANTHER" id="PTHR15217">
    <property type="entry name" value="WILMS' TUMOR 1-ASSOCIATING PROTEIN"/>
    <property type="match status" value="1"/>
</dbReference>
<dbReference type="Pfam" id="PF17098">
    <property type="entry name" value="Wtap"/>
    <property type="match status" value="1"/>
</dbReference>
<gene>
    <name evidence="1" type="primary">wtap</name>
    <name evidence="3" type="ORF">TEgg011e08.1</name>
    <name evidence="3" type="ORF">TEgg064m08.1</name>
</gene>
<name>FL2D_XENTR</name>
<feature type="chain" id="PRO_0000308629" description="Pre-mRNA-splicing regulator WTAP">
    <location>
        <begin position="1"/>
        <end position="393"/>
    </location>
</feature>
<feature type="region of interest" description="Disordered" evidence="2">
    <location>
        <begin position="240"/>
        <end position="393"/>
    </location>
</feature>
<feature type="compositionally biased region" description="Basic and acidic residues" evidence="2">
    <location>
        <begin position="254"/>
        <end position="267"/>
    </location>
</feature>
<feature type="compositionally biased region" description="Polar residues" evidence="2">
    <location>
        <begin position="272"/>
        <end position="286"/>
    </location>
</feature>
<feature type="compositionally biased region" description="Basic and acidic residues" evidence="2">
    <location>
        <begin position="310"/>
        <end position="319"/>
    </location>
</feature>
<feature type="compositionally biased region" description="Polar residues" evidence="2">
    <location>
        <begin position="320"/>
        <end position="353"/>
    </location>
</feature>
<feature type="compositionally biased region" description="Basic and acidic residues" evidence="2">
    <location>
        <begin position="354"/>
        <end position="365"/>
    </location>
</feature>
<feature type="compositionally biased region" description="Polar residues" evidence="2">
    <location>
        <begin position="369"/>
        <end position="393"/>
    </location>
</feature>
<accession>Q6P4K5</accession>
<comment type="function">
    <text evidence="1">Associated component of the WMM complex, a complex that mediates N6-methyladenosine (m6A) methylation of RNAs, a modification that plays a role in the efficiency of mRNA splicing and RNA processing.</text>
</comment>
<comment type="subunit">
    <text evidence="1">Component of the WMM complex, a N6-methyltransferase complex composed of a catalytic subcomplex, named MAC, and of an associated subcomplex, named MACOM. Component of the MACOM subcomplex.</text>
</comment>
<comment type="subcellular location">
    <subcellularLocation>
        <location evidence="1">Nucleus speckle</location>
    </subcellularLocation>
    <subcellularLocation>
        <location evidence="1">Nucleus</location>
        <location evidence="1">Nucleoplasm</location>
    </subcellularLocation>
</comment>
<comment type="similarity">
    <text evidence="4">Belongs to the fl(2)d family.</text>
</comment>
<keyword id="KW-0131">Cell cycle</keyword>
<keyword id="KW-0217">Developmental protein</keyword>
<keyword id="KW-0507">mRNA processing</keyword>
<keyword id="KW-0508">mRNA splicing</keyword>
<keyword id="KW-0539">Nucleus</keyword>
<keyword id="KW-1185">Reference proteome</keyword>
<evidence type="ECO:0000250" key="1">
    <source>
        <dbReference type="UniProtKB" id="Q15007"/>
    </source>
</evidence>
<evidence type="ECO:0000256" key="2">
    <source>
        <dbReference type="SAM" id="MobiDB-lite"/>
    </source>
</evidence>
<evidence type="ECO:0000303" key="3">
    <source ref="1"/>
</evidence>
<evidence type="ECO:0000305" key="4"/>